<feature type="chain" id="PRO_0000058902" description="Serine/threonine-protein phosphatase with EF-hands 2">
    <location>
        <begin position="1"/>
        <end position="757"/>
    </location>
</feature>
<feature type="domain" description="IQ" evidence="2">
    <location>
        <begin position="21"/>
        <end position="46"/>
    </location>
</feature>
<feature type="domain" description="EF-hand 1" evidence="3">
    <location>
        <begin position="572"/>
        <end position="607"/>
    </location>
</feature>
<feature type="domain" description="EF-hand 2" evidence="3">
    <location>
        <begin position="656"/>
        <end position="691"/>
    </location>
</feature>
<feature type="domain" description="EF-hand 3" evidence="3">
    <location>
        <begin position="696"/>
        <end position="731"/>
    </location>
</feature>
<feature type="region of interest" description="Catalytic">
    <location>
        <begin position="128"/>
        <end position="544"/>
    </location>
</feature>
<feature type="region of interest" description="Disordered" evidence="4">
    <location>
        <begin position="318"/>
        <end position="349"/>
    </location>
</feature>
<feature type="compositionally biased region" description="Basic and acidic residues" evidence="4">
    <location>
        <begin position="321"/>
        <end position="335"/>
    </location>
</feature>
<feature type="active site" description="Proton donor" evidence="1">
    <location>
        <position position="241"/>
    </location>
</feature>
<feature type="binding site" evidence="1">
    <location>
        <position position="179"/>
    </location>
    <ligand>
        <name>Mn(2+)</name>
        <dbReference type="ChEBI" id="CHEBI:29035"/>
        <label>1</label>
    </ligand>
</feature>
<feature type="binding site" evidence="1">
    <location>
        <position position="181"/>
    </location>
    <ligand>
        <name>Mn(2+)</name>
        <dbReference type="ChEBI" id="CHEBI:29035"/>
        <label>1</label>
    </ligand>
</feature>
<feature type="binding site" evidence="1">
    <location>
        <position position="208"/>
    </location>
    <ligand>
        <name>Mn(2+)</name>
        <dbReference type="ChEBI" id="CHEBI:29035"/>
        <label>1</label>
    </ligand>
</feature>
<feature type="binding site" evidence="1">
    <location>
        <position position="208"/>
    </location>
    <ligand>
        <name>Mn(2+)</name>
        <dbReference type="ChEBI" id="CHEBI:29035"/>
        <label>2</label>
    </ligand>
</feature>
<feature type="binding site" evidence="1">
    <location>
        <position position="240"/>
    </location>
    <ligand>
        <name>Mn(2+)</name>
        <dbReference type="ChEBI" id="CHEBI:29035"/>
        <label>2</label>
    </ligand>
</feature>
<feature type="binding site" evidence="1">
    <location>
        <position position="292"/>
    </location>
    <ligand>
        <name>Mn(2+)</name>
        <dbReference type="ChEBI" id="CHEBI:29035"/>
        <label>2</label>
    </ligand>
</feature>
<feature type="binding site" evidence="1">
    <location>
        <position position="492"/>
    </location>
    <ligand>
        <name>Mn(2+)</name>
        <dbReference type="ChEBI" id="CHEBI:29035"/>
        <label>2</label>
    </ligand>
</feature>
<feature type="binding site" evidence="3">
    <location>
        <position position="585"/>
    </location>
    <ligand>
        <name>Ca(2+)</name>
        <dbReference type="ChEBI" id="CHEBI:29108"/>
        <label>1</label>
    </ligand>
</feature>
<feature type="binding site" evidence="3">
    <location>
        <position position="587"/>
    </location>
    <ligand>
        <name>Ca(2+)</name>
        <dbReference type="ChEBI" id="CHEBI:29108"/>
        <label>1</label>
    </ligand>
</feature>
<feature type="binding site" evidence="3">
    <location>
        <position position="589"/>
    </location>
    <ligand>
        <name>Ca(2+)</name>
        <dbReference type="ChEBI" id="CHEBI:29108"/>
        <label>1</label>
    </ligand>
</feature>
<feature type="binding site" evidence="3">
    <location>
        <position position="596"/>
    </location>
    <ligand>
        <name>Ca(2+)</name>
        <dbReference type="ChEBI" id="CHEBI:29108"/>
        <label>1</label>
    </ligand>
</feature>
<feature type="binding site" evidence="3">
    <location>
        <position position="669"/>
    </location>
    <ligand>
        <name>Ca(2+)</name>
        <dbReference type="ChEBI" id="CHEBI:29108"/>
        <label>2</label>
    </ligand>
</feature>
<feature type="binding site" evidence="3">
    <location>
        <position position="671"/>
    </location>
    <ligand>
        <name>Ca(2+)</name>
        <dbReference type="ChEBI" id="CHEBI:29108"/>
        <label>2</label>
    </ligand>
</feature>
<feature type="binding site" evidence="3">
    <location>
        <position position="673"/>
    </location>
    <ligand>
        <name>Ca(2+)</name>
        <dbReference type="ChEBI" id="CHEBI:29108"/>
        <label>2</label>
    </ligand>
</feature>
<feature type="binding site" evidence="3">
    <location>
        <position position="680"/>
    </location>
    <ligand>
        <name>Ca(2+)</name>
        <dbReference type="ChEBI" id="CHEBI:29108"/>
        <label>2</label>
    </ligand>
</feature>
<feature type="binding site" evidence="3">
    <location>
        <position position="709"/>
    </location>
    <ligand>
        <name>Ca(2+)</name>
        <dbReference type="ChEBI" id="CHEBI:29108"/>
        <label>3</label>
    </ligand>
</feature>
<feature type="binding site" evidence="3">
    <location>
        <position position="711"/>
    </location>
    <ligand>
        <name>Ca(2+)</name>
        <dbReference type="ChEBI" id="CHEBI:29108"/>
        <label>3</label>
    </ligand>
</feature>
<feature type="binding site" evidence="3">
    <location>
        <position position="713"/>
    </location>
    <ligand>
        <name>Ca(2+)</name>
        <dbReference type="ChEBI" id="CHEBI:29108"/>
        <label>3</label>
    </ligand>
</feature>
<feature type="binding site" evidence="3">
    <location>
        <position position="715"/>
    </location>
    <ligand>
        <name>Ca(2+)</name>
        <dbReference type="ChEBI" id="CHEBI:29108"/>
        <label>3</label>
    </ligand>
</feature>
<feature type="binding site" evidence="3">
    <location>
        <position position="720"/>
    </location>
    <ligand>
        <name>Ca(2+)</name>
        <dbReference type="ChEBI" id="CHEBI:29108"/>
        <label>3</label>
    </ligand>
</feature>
<dbReference type="EC" id="3.1.3.16"/>
<dbReference type="EMBL" id="AF023458">
    <property type="protein sequence ID" value="AAB82798.1"/>
    <property type="molecule type" value="mRNA"/>
</dbReference>
<dbReference type="EMBL" id="BC027049">
    <property type="protein sequence ID" value="AAH27049.1"/>
    <property type="molecule type" value="mRNA"/>
</dbReference>
<dbReference type="CCDS" id="CCDS39151.1"/>
<dbReference type="RefSeq" id="NP_035278.1">
    <property type="nucleotide sequence ID" value="NM_011148.5"/>
</dbReference>
<dbReference type="RefSeq" id="XP_006534880.1">
    <property type="nucleotide sequence ID" value="XM_006534817.2"/>
</dbReference>
<dbReference type="PDB" id="8ZLX">
    <property type="method" value="X-ray"/>
    <property type="resolution" value="2.50 A"/>
    <property type="chains" value="a/b/c/d=22-39"/>
</dbReference>
<dbReference type="PDBsum" id="8ZLX"/>
<dbReference type="SMR" id="O35385"/>
<dbReference type="BioGRID" id="202323">
    <property type="interactions" value="1"/>
</dbReference>
<dbReference type="FunCoup" id="O35385">
    <property type="interactions" value="990"/>
</dbReference>
<dbReference type="STRING" id="10090.ENSMUSP00000144157"/>
<dbReference type="GlyGen" id="O35385">
    <property type="glycosylation" value="1 site, 1 O-linked glycan (1 site)"/>
</dbReference>
<dbReference type="iPTMnet" id="O35385"/>
<dbReference type="PhosphoSitePlus" id="O35385"/>
<dbReference type="PaxDb" id="10090-ENSMUSP00000031359"/>
<dbReference type="ProteomicsDB" id="289877"/>
<dbReference type="Antibodypedia" id="13410">
    <property type="antibodies" value="64 antibodies from 17 providers"/>
</dbReference>
<dbReference type="DNASU" id="19023"/>
<dbReference type="Ensembl" id="ENSMUST00000031359.9">
    <property type="protein sequence ID" value="ENSMUSP00000031359.9"/>
    <property type="gene ID" value="ENSMUSG00000029410.12"/>
</dbReference>
<dbReference type="Ensembl" id="ENSMUST00000201130.4">
    <property type="protein sequence ID" value="ENSMUSP00000144157.2"/>
    <property type="gene ID" value="ENSMUSG00000029410.12"/>
</dbReference>
<dbReference type="GeneID" id="19023"/>
<dbReference type="KEGG" id="mmu:19023"/>
<dbReference type="UCSC" id="uc008yco.2">
    <property type="organism name" value="mouse"/>
</dbReference>
<dbReference type="AGR" id="MGI:1342304"/>
<dbReference type="CTD" id="5470"/>
<dbReference type="MGI" id="MGI:1342304">
    <property type="gene designation" value="Ppef2"/>
</dbReference>
<dbReference type="VEuPathDB" id="HostDB:ENSMUSG00000029410"/>
<dbReference type="eggNOG" id="KOG0377">
    <property type="taxonomic scope" value="Eukaryota"/>
</dbReference>
<dbReference type="GeneTree" id="ENSGT00940000157870"/>
<dbReference type="InParanoid" id="O35385"/>
<dbReference type="OMA" id="CRENKVR"/>
<dbReference type="OrthoDB" id="442428at2759"/>
<dbReference type="PhylomeDB" id="O35385"/>
<dbReference type="TreeFam" id="TF313342"/>
<dbReference type="BioGRID-ORCS" id="19023">
    <property type="hits" value="0 hits in 77 CRISPR screens"/>
</dbReference>
<dbReference type="PRO" id="PR:O35385"/>
<dbReference type="Proteomes" id="UP000000589">
    <property type="component" value="Chromosome 5"/>
</dbReference>
<dbReference type="RNAct" id="O35385">
    <property type="molecule type" value="protein"/>
</dbReference>
<dbReference type="Bgee" id="ENSMUSG00000029410">
    <property type="expression patterns" value="Expressed in retinal neural layer and 43 other cell types or tissues"/>
</dbReference>
<dbReference type="GO" id="GO:0005509">
    <property type="term" value="F:calcium ion binding"/>
    <property type="evidence" value="ECO:0007669"/>
    <property type="project" value="InterPro"/>
</dbReference>
<dbReference type="GO" id="GO:0030544">
    <property type="term" value="F:Hsp70 protein binding"/>
    <property type="evidence" value="ECO:0007669"/>
    <property type="project" value="Ensembl"/>
</dbReference>
<dbReference type="GO" id="GO:0051879">
    <property type="term" value="F:Hsp90 protein binding"/>
    <property type="evidence" value="ECO:0007669"/>
    <property type="project" value="Ensembl"/>
</dbReference>
<dbReference type="GO" id="GO:0005506">
    <property type="term" value="F:iron ion binding"/>
    <property type="evidence" value="ECO:0007669"/>
    <property type="project" value="InterPro"/>
</dbReference>
<dbReference type="GO" id="GO:0030145">
    <property type="term" value="F:manganese ion binding"/>
    <property type="evidence" value="ECO:0007669"/>
    <property type="project" value="InterPro"/>
</dbReference>
<dbReference type="GO" id="GO:0031435">
    <property type="term" value="F:mitogen-activated protein kinase kinase kinase binding"/>
    <property type="evidence" value="ECO:0007669"/>
    <property type="project" value="Ensembl"/>
</dbReference>
<dbReference type="GO" id="GO:0030291">
    <property type="term" value="F:protein serine/threonine kinase inhibitor activity"/>
    <property type="evidence" value="ECO:0007669"/>
    <property type="project" value="Ensembl"/>
</dbReference>
<dbReference type="GO" id="GO:0004722">
    <property type="term" value="F:protein serine/threonine phosphatase activity"/>
    <property type="evidence" value="ECO:0000250"/>
    <property type="project" value="MGI"/>
</dbReference>
<dbReference type="GO" id="GO:0070301">
    <property type="term" value="P:cellular response to hydrogen peroxide"/>
    <property type="evidence" value="ECO:0007669"/>
    <property type="project" value="Ensembl"/>
</dbReference>
<dbReference type="GO" id="GO:0050906">
    <property type="term" value="P:detection of stimulus involved in sensory perception"/>
    <property type="evidence" value="ECO:0007669"/>
    <property type="project" value="InterPro"/>
</dbReference>
<dbReference type="GO" id="GO:2001234">
    <property type="term" value="P:negative regulation of apoptotic signaling pathway"/>
    <property type="evidence" value="ECO:0007669"/>
    <property type="project" value="Ensembl"/>
</dbReference>
<dbReference type="GO" id="GO:0043409">
    <property type="term" value="P:negative regulation of MAPK cascade"/>
    <property type="evidence" value="ECO:0007669"/>
    <property type="project" value="Ensembl"/>
</dbReference>
<dbReference type="GO" id="GO:0007601">
    <property type="term" value="P:visual perception"/>
    <property type="evidence" value="ECO:0007669"/>
    <property type="project" value="UniProtKB-KW"/>
</dbReference>
<dbReference type="CDD" id="cd00051">
    <property type="entry name" value="EFh"/>
    <property type="match status" value="1"/>
</dbReference>
<dbReference type="CDD" id="cd23767">
    <property type="entry name" value="IQCD"/>
    <property type="match status" value="1"/>
</dbReference>
<dbReference type="CDD" id="cd07420">
    <property type="entry name" value="MPP_RdgC"/>
    <property type="match status" value="1"/>
</dbReference>
<dbReference type="FunFam" id="1.10.238.10:FF:000226">
    <property type="entry name" value="Serine/threonine-protein phosphatase with EF-hands"/>
    <property type="match status" value="1"/>
</dbReference>
<dbReference type="FunFam" id="3.60.21.10:FF:000042">
    <property type="entry name" value="Serine/threonine-protein phosphatase with EF-hands"/>
    <property type="match status" value="1"/>
</dbReference>
<dbReference type="FunFam" id="3.60.21.10:FF:000073">
    <property type="entry name" value="Serine/threonine-protein phosphatase with EF-hands"/>
    <property type="match status" value="1"/>
</dbReference>
<dbReference type="Gene3D" id="3.60.21.10">
    <property type="match status" value="2"/>
</dbReference>
<dbReference type="Gene3D" id="1.10.238.10">
    <property type="entry name" value="EF-hand"/>
    <property type="match status" value="1"/>
</dbReference>
<dbReference type="InterPro" id="IPR004843">
    <property type="entry name" value="Calcineurin-like_PHP_ApaH"/>
</dbReference>
<dbReference type="InterPro" id="IPR011992">
    <property type="entry name" value="EF-hand-dom_pair"/>
</dbReference>
<dbReference type="InterPro" id="IPR018247">
    <property type="entry name" value="EF_Hand_1_Ca_BS"/>
</dbReference>
<dbReference type="InterPro" id="IPR002048">
    <property type="entry name" value="EF_hand_dom"/>
</dbReference>
<dbReference type="InterPro" id="IPR029052">
    <property type="entry name" value="Metallo-depent_PP-like"/>
</dbReference>
<dbReference type="InterPro" id="IPR013235">
    <property type="entry name" value="PPP_dom"/>
</dbReference>
<dbReference type="InterPro" id="IPR051134">
    <property type="entry name" value="PPP_phosphatase"/>
</dbReference>
<dbReference type="InterPro" id="IPR012008">
    <property type="entry name" value="Ser/Thr-Pase_EF-hand_contain"/>
</dbReference>
<dbReference type="InterPro" id="IPR006186">
    <property type="entry name" value="Ser/Thr-sp_prot-phosphatase"/>
</dbReference>
<dbReference type="PANTHER" id="PTHR45668">
    <property type="entry name" value="SERINE/THREONINE-PROTEIN PHOSPHATASE 5-RELATED"/>
    <property type="match status" value="1"/>
</dbReference>
<dbReference type="PANTHER" id="PTHR45668:SF2">
    <property type="entry name" value="SERINE_THREONINE-PROTEIN PHOSPHATASE WITH EF-HANDS 2"/>
    <property type="match status" value="1"/>
</dbReference>
<dbReference type="Pfam" id="PF13499">
    <property type="entry name" value="EF-hand_7"/>
    <property type="match status" value="1"/>
</dbReference>
<dbReference type="Pfam" id="PF00149">
    <property type="entry name" value="Metallophos"/>
    <property type="match status" value="1"/>
</dbReference>
<dbReference type="Pfam" id="PF08321">
    <property type="entry name" value="PPP5"/>
    <property type="match status" value="1"/>
</dbReference>
<dbReference type="PIRSF" id="PIRSF000912">
    <property type="entry name" value="PPEF"/>
    <property type="match status" value="1"/>
</dbReference>
<dbReference type="PRINTS" id="PR00114">
    <property type="entry name" value="STPHPHTASE"/>
</dbReference>
<dbReference type="SMART" id="SM00054">
    <property type="entry name" value="EFh"/>
    <property type="match status" value="3"/>
</dbReference>
<dbReference type="SMART" id="SM00156">
    <property type="entry name" value="PP2Ac"/>
    <property type="match status" value="1"/>
</dbReference>
<dbReference type="SUPFAM" id="SSF47473">
    <property type="entry name" value="EF-hand"/>
    <property type="match status" value="1"/>
</dbReference>
<dbReference type="SUPFAM" id="SSF56300">
    <property type="entry name" value="Metallo-dependent phosphatases"/>
    <property type="match status" value="1"/>
</dbReference>
<dbReference type="PROSITE" id="PS00018">
    <property type="entry name" value="EF_HAND_1"/>
    <property type="match status" value="3"/>
</dbReference>
<dbReference type="PROSITE" id="PS50222">
    <property type="entry name" value="EF_HAND_2"/>
    <property type="match status" value="3"/>
</dbReference>
<dbReference type="PROSITE" id="PS50096">
    <property type="entry name" value="IQ"/>
    <property type="match status" value="1"/>
</dbReference>
<dbReference type="PROSITE" id="PS00125">
    <property type="entry name" value="SER_THR_PHOSPHATASE"/>
    <property type="match status" value="1"/>
</dbReference>
<protein>
    <recommendedName>
        <fullName>Serine/threonine-protein phosphatase with EF-hands 2</fullName>
        <shortName>PPEF-2</shortName>
        <ecNumber>3.1.3.16</ecNumber>
    </recommendedName>
</protein>
<gene>
    <name type="primary">Ppef2</name>
</gene>
<organism>
    <name type="scientific">Mus musculus</name>
    <name type="common">Mouse</name>
    <dbReference type="NCBI Taxonomy" id="10090"/>
    <lineage>
        <taxon>Eukaryota</taxon>
        <taxon>Metazoa</taxon>
        <taxon>Chordata</taxon>
        <taxon>Craniata</taxon>
        <taxon>Vertebrata</taxon>
        <taxon>Euteleostomi</taxon>
        <taxon>Mammalia</taxon>
        <taxon>Eutheria</taxon>
        <taxon>Euarchontoglires</taxon>
        <taxon>Glires</taxon>
        <taxon>Rodentia</taxon>
        <taxon>Myomorpha</taxon>
        <taxon>Muroidea</taxon>
        <taxon>Muridae</taxon>
        <taxon>Murinae</taxon>
        <taxon>Mus</taxon>
        <taxon>Mus</taxon>
    </lineage>
</organism>
<keyword id="KW-0002">3D-structure</keyword>
<keyword id="KW-0106">Calcium</keyword>
<keyword id="KW-0378">Hydrolase</keyword>
<keyword id="KW-0464">Manganese</keyword>
<keyword id="KW-0479">Metal-binding</keyword>
<keyword id="KW-0904">Protein phosphatase</keyword>
<keyword id="KW-1185">Reference proteome</keyword>
<keyword id="KW-0677">Repeat</keyword>
<keyword id="KW-0716">Sensory transduction</keyword>
<keyword id="KW-0844">Vision</keyword>
<name>PPE2_MOUSE</name>
<accession>O35385</accession>
<reference key="1">
    <citation type="journal article" date="1997" name="Proc. Natl. Acad. Sci. U.S.A.">
        <title>Identification and characterization of a conserved family of protein serine/threonine phosphatases homologous to Drosophila retinal degeneration C.</title>
        <authorList>
            <person name="Sherman P.M."/>
            <person name="Sun H."/>
            <person name="Macke J.P."/>
            <person name="Williams J."/>
            <person name="Smallwood P.M."/>
            <person name="Nathans J."/>
        </authorList>
    </citation>
    <scope>NUCLEOTIDE SEQUENCE [MRNA]</scope>
    <source>
        <tissue>Eye</tissue>
    </source>
</reference>
<reference key="2">
    <citation type="journal article" date="2004" name="Genome Res.">
        <title>The status, quality, and expansion of the NIH full-length cDNA project: the Mammalian Gene Collection (MGC).</title>
        <authorList>
            <consortium name="The MGC Project Team"/>
        </authorList>
    </citation>
    <scope>NUCLEOTIDE SEQUENCE [LARGE SCALE MRNA]</scope>
    <source>
        <strain>C57BL/6J</strain>
        <tissue>Retina</tissue>
    </source>
</reference>
<comment type="function">
    <text>May play a role in phototransduction. May dephosphorylate photoactivated rhodopsin. May function as a calcium sensing regulator of ionic currents, energy production or synaptic transmission.</text>
</comment>
<comment type="catalytic activity">
    <reaction>
        <text>O-phospho-L-seryl-[protein] + H2O = L-seryl-[protein] + phosphate</text>
        <dbReference type="Rhea" id="RHEA:20629"/>
        <dbReference type="Rhea" id="RHEA-COMP:9863"/>
        <dbReference type="Rhea" id="RHEA-COMP:11604"/>
        <dbReference type="ChEBI" id="CHEBI:15377"/>
        <dbReference type="ChEBI" id="CHEBI:29999"/>
        <dbReference type="ChEBI" id="CHEBI:43474"/>
        <dbReference type="ChEBI" id="CHEBI:83421"/>
        <dbReference type="EC" id="3.1.3.16"/>
    </reaction>
</comment>
<comment type="catalytic activity">
    <reaction>
        <text>O-phospho-L-threonyl-[protein] + H2O = L-threonyl-[protein] + phosphate</text>
        <dbReference type="Rhea" id="RHEA:47004"/>
        <dbReference type="Rhea" id="RHEA-COMP:11060"/>
        <dbReference type="Rhea" id="RHEA-COMP:11605"/>
        <dbReference type="ChEBI" id="CHEBI:15377"/>
        <dbReference type="ChEBI" id="CHEBI:30013"/>
        <dbReference type="ChEBI" id="CHEBI:43474"/>
        <dbReference type="ChEBI" id="CHEBI:61977"/>
        <dbReference type="EC" id="3.1.3.16"/>
    </reaction>
</comment>
<comment type="cofactor">
    <cofactor evidence="1">
        <name>Mn(2+)</name>
        <dbReference type="ChEBI" id="CHEBI:29035"/>
    </cofactor>
    <text evidence="1">Binds 2 manganese ions per subunit.</text>
</comment>
<comment type="activity regulation">
    <text evidence="1">Activated by calcium.</text>
</comment>
<comment type="tissue specificity">
    <text>Detected in retina, more specifically in photoreceptors.</text>
</comment>
<comment type="similarity">
    <text evidence="5">Belongs to the PPP phosphatase family.</text>
</comment>
<sequence length="757" mass="86645">MGSSSSTQHHFAFQNAEKAFKAAALIQRWYRRYMARLEMRRRCTWNIFQSIEYAGQQDQVKLHEFFSYLVDHFTPSSHHERDFLNRMFTEERFAQDVETEEGGDFESIEVPDSYTGPRLSFPLLPDHATALVEAFRLRQQLHARYVLNLLYETRKHLAQLPNINRVSTCYSEEVTVCGDLHGQLDDLIFIFYKNGLPSPERAYVFNGDFVDRGKDSVEVLMVLFAFMLVYPKEFHLNRGNHEDHLVNLRYGFTKEVMHKYKIHGKKILRTLQDVFCWLPLATLVDEKVLVLHGGVSDKTDLELLAKLDRHKIVSTMRCKTRKESENREEQKRKDNQTSSGQKPTPWFLPQSRSLPSSPFHLGSGFKAYKAGRSCSIPCGSPNSKELSRRGQVRRSVDLELEQCRQQAGFLGIREKGESLPLAPDADCVADGGGVLEPTPEEWKQVVDILWSDPAAQEGCKANAVRGGGCYFGPDVTERLMEKYKLQLLIRSHECKPEGYEFCHNRKVLTIFSASNYYEVGSNRGAYVKLGPALTPHIVQYQANKATHRLTMRQRISRVEESALRALRQKLFAHSSDLLVEFRKRDPDESGVITLSDWATAVESVLHLGLPWRMLRPQLVNSSADNVLEYRSWLDSLAKEQLSRENIQSSLLEKLYRNRSNLETIFRIIDSDHSGFISLDEFRQTWKLFSSHMSIDITDDGICDLARSIDFNKDGHIDINEFLEAFRLVEQSCLEGHASACLQSTDTAESGHSSPGPC</sequence>
<evidence type="ECO:0000250" key="1"/>
<evidence type="ECO:0000255" key="2">
    <source>
        <dbReference type="PROSITE-ProRule" id="PRU00116"/>
    </source>
</evidence>
<evidence type="ECO:0000255" key="3">
    <source>
        <dbReference type="PROSITE-ProRule" id="PRU00448"/>
    </source>
</evidence>
<evidence type="ECO:0000256" key="4">
    <source>
        <dbReference type="SAM" id="MobiDB-lite"/>
    </source>
</evidence>
<evidence type="ECO:0000305" key="5"/>
<proteinExistence type="evidence at protein level"/>